<sequence length="295" mass="30902">MSLGALISESRNPATMELDKLSTLAMLTCINDEDRKVPDAIRLVLPAVAQAVDLAADALKQGGRLIYLGAGTSGRLGVLDASECPPTFGVPHGMVIGLIAGGPGALLKAVEGAEDDIALGMRDLQDLQLTATDMVVGLAASGRTPYVIGALRYARELGCPTAAISCNPDSPIAQEAQVAISPVVGPEALTGSTRMKSGTAQKLVLNMLSTGAMVKLGKVYQNLMVDVKATNVKLVDRACRIVVEATGVSRAEAEHALRQTDFEVKPAILMLLKGVSAEQARQDLRQHHGYLRAAL</sequence>
<reference key="1">
    <citation type="journal article" date="2004" name="Proc. Natl. Acad. Sci. U.S.A.">
        <title>Insights into the evolution of Yersinia pestis through whole-genome comparison with Yersinia pseudotuberculosis.</title>
        <authorList>
            <person name="Chain P.S.G."/>
            <person name="Carniel E."/>
            <person name="Larimer F.W."/>
            <person name="Lamerdin J."/>
            <person name="Stoutland P.O."/>
            <person name="Regala W.M."/>
            <person name="Georgescu A.M."/>
            <person name="Vergez L.M."/>
            <person name="Land M.L."/>
            <person name="Motin V.L."/>
            <person name="Brubaker R.R."/>
            <person name="Fowler J."/>
            <person name="Hinnebusch J."/>
            <person name="Marceau M."/>
            <person name="Medigue C."/>
            <person name="Simonet M."/>
            <person name="Chenal-Francisque V."/>
            <person name="Souza B."/>
            <person name="Dacheux D."/>
            <person name="Elliott J.M."/>
            <person name="Derbise A."/>
            <person name="Hauser L.J."/>
            <person name="Garcia E."/>
        </authorList>
    </citation>
    <scope>NUCLEOTIDE SEQUENCE [LARGE SCALE GENOMIC DNA]</scope>
    <source>
        <strain>IP32953</strain>
    </source>
</reference>
<keyword id="KW-0119">Carbohydrate metabolism</keyword>
<keyword id="KW-0456">Lyase</keyword>
<gene>
    <name evidence="1" type="primary">murQ</name>
    <name type="ordered locus">YPTB2883</name>
</gene>
<feature type="chain" id="PRO_0000249678" description="N-acetylmuramic acid 6-phosphate etherase">
    <location>
        <begin position="1"/>
        <end position="295"/>
    </location>
</feature>
<feature type="domain" description="SIS" evidence="1">
    <location>
        <begin position="55"/>
        <end position="218"/>
    </location>
</feature>
<feature type="active site" description="Proton donor" evidence="1">
    <location>
        <position position="83"/>
    </location>
</feature>
<feature type="active site" evidence="1">
    <location>
        <position position="114"/>
    </location>
</feature>
<protein>
    <recommendedName>
        <fullName evidence="1">N-acetylmuramic acid 6-phosphate etherase</fullName>
        <shortName evidence="1">MurNAc-6-P etherase</shortName>
        <ecNumber evidence="1">4.2.1.126</ecNumber>
    </recommendedName>
    <alternativeName>
        <fullName evidence="1">N-acetylmuramic acid 6-phosphate hydrolase</fullName>
    </alternativeName>
    <alternativeName>
        <fullName evidence="1">N-acetylmuramic acid 6-phosphate lyase</fullName>
    </alternativeName>
</protein>
<evidence type="ECO:0000255" key="1">
    <source>
        <dbReference type="HAMAP-Rule" id="MF_00068"/>
    </source>
</evidence>
<proteinExistence type="inferred from homology"/>
<organism>
    <name type="scientific">Yersinia pseudotuberculosis serotype I (strain IP32953)</name>
    <dbReference type="NCBI Taxonomy" id="273123"/>
    <lineage>
        <taxon>Bacteria</taxon>
        <taxon>Pseudomonadati</taxon>
        <taxon>Pseudomonadota</taxon>
        <taxon>Gammaproteobacteria</taxon>
        <taxon>Enterobacterales</taxon>
        <taxon>Yersiniaceae</taxon>
        <taxon>Yersinia</taxon>
    </lineage>
</organism>
<name>MURQ_YERPS</name>
<comment type="function">
    <text evidence="1">Specifically catalyzes the cleavage of the D-lactyl ether substituent of MurNAc 6-phosphate, producing GlcNAc 6-phosphate and D-lactate. Together with AnmK, is also required for the utilization of anhydro-N-acetylmuramic acid (anhMurNAc) either imported from the medium or derived from its own cell wall murein, and thus plays a role in cell wall recycling.</text>
</comment>
<comment type="catalytic activity">
    <reaction evidence="1">
        <text>N-acetyl-D-muramate 6-phosphate + H2O = N-acetyl-D-glucosamine 6-phosphate + (R)-lactate</text>
        <dbReference type="Rhea" id="RHEA:26410"/>
        <dbReference type="ChEBI" id="CHEBI:15377"/>
        <dbReference type="ChEBI" id="CHEBI:16004"/>
        <dbReference type="ChEBI" id="CHEBI:57513"/>
        <dbReference type="ChEBI" id="CHEBI:58722"/>
        <dbReference type="EC" id="4.2.1.126"/>
    </reaction>
</comment>
<comment type="pathway">
    <text evidence="1">Amino-sugar metabolism; 1,6-anhydro-N-acetylmuramate degradation.</text>
</comment>
<comment type="pathway">
    <text evidence="1">Amino-sugar metabolism; N-acetylmuramate degradation.</text>
</comment>
<comment type="pathway">
    <text evidence="1">Cell wall biogenesis; peptidoglycan recycling.</text>
</comment>
<comment type="subunit">
    <text evidence="1">Homodimer.</text>
</comment>
<comment type="induction">
    <text evidence="1">Induced by MurNAc 6-phosphate that releases the repressor MurR from the DNA. Repressed by MurR in the absence of MurNAc 6-phosphate.</text>
</comment>
<comment type="miscellaneous">
    <text evidence="1">A lyase-type mechanism (elimination/hydration) is suggested for the cleavage of the lactyl ether bond of MurNAc 6-phosphate, with the formation of an alpha,beta-unsaturated aldehyde intermediate with (E)-stereochemistry, followed by the syn addition of water to give product.</text>
</comment>
<comment type="similarity">
    <text evidence="1">Belongs to the GCKR-like family. MurNAc-6-P etherase subfamily.</text>
</comment>
<accession>Q667V7</accession>
<dbReference type="EC" id="4.2.1.126" evidence="1"/>
<dbReference type="EMBL" id="BX936398">
    <property type="protein sequence ID" value="CAH22121.1"/>
    <property type="molecule type" value="Genomic_DNA"/>
</dbReference>
<dbReference type="RefSeq" id="WP_002211565.1">
    <property type="nucleotide sequence ID" value="NZ_CP009712.1"/>
</dbReference>
<dbReference type="SMR" id="Q667V7"/>
<dbReference type="GeneID" id="57975879"/>
<dbReference type="KEGG" id="ypo:BZ17_3748"/>
<dbReference type="KEGG" id="yps:YPTB2883"/>
<dbReference type="PATRIC" id="fig|273123.14.peg.3930"/>
<dbReference type="UniPathway" id="UPA00342"/>
<dbReference type="UniPathway" id="UPA00343"/>
<dbReference type="UniPathway" id="UPA00544"/>
<dbReference type="Proteomes" id="UP000001011">
    <property type="component" value="Chromosome"/>
</dbReference>
<dbReference type="GO" id="GO:0097367">
    <property type="term" value="F:carbohydrate derivative binding"/>
    <property type="evidence" value="ECO:0007669"/>
    <property type="project" value="InterPro"/>
</dbReference>
<dbReference type="GO" id="GO:0016835">
    <property type="term" value="F:carbon-oxygen lyase activity"/>
    <property type="evidence" value="ECO:0007669"/>
    <property type="project" value="UniProtKB-UniRule"/>
</dbReference>
<dbReference type="GO" id="GO:0016803">
    <property type="term" value="F:ether hydrolase activity"/>
    <property type="evidence" value="ECO:0007669"/>
    <property type="project" value="TreeGrafter"/>
</dbReference>
<dbReference type="GO" id="GO:0097175">
    <property type="term" value="P:1,6-anhydro-N-acetyl-beta-muramic acid catabolic process"/>
    <property type="evidence" value="ECO:0007669"/>
    <property type="project" value="UniProtKB-UniRule"/>
</dbReference>
<dbReference type="GO" id="GO:0046348">
    <property type="term" value="P:amino sugar catabolic process"/>
    <property type="evidence" value="ECO:0007669"/>
    <property type="project" value="InterPro"/>
</dbReference>
<dbReference type="GO" id="GO:0097173">
    <property type="term" value="P:N-acetylmuramic acid catabolic process"/>
    <property type="evidence" value="ECO:0007669"/>
    <property type="project" value="UniProtKB-UniPathway"/>
</dbReference>
<dbReference type="GO" id="GO:0009254">
    <property type="term" value="P:peptidoglycan turnover"/>
    <property type="evidence" value="ECO:0007669"/>
    <property type="project" value="UniProtKB-UniRule"/>
</dbReference>
<dbReference type="CDD" id="cd05007">
    <property type="entry name" value="SIS_Etherase"/>
    <property type="match status" value="1"/>
</dbReference>
<dbReference type="FunFam" id="1.10.8.1080:FF:000001">
    <property type="entry name" value="N-acetylmuramic acid 6-phosphate etherase"/>
    <property type="match status" value="1"/>
</dbReference>
<dbReference type="FunFam" id="3.40.50.10490:FF:000014">
    <property type="entry name" value="N-acetylmuramic acid 6-phosphate etherase"/>
    <property type="match status" value="1"/>
</dbReference>
<dbReference type="Gene3D" id="1.10.8.1080">
    <property type="match status" value="1"/>
</dbReference>
<dbReference type="Gene3D" id="3.40.50.10490">
    <property type="entry name" value="Glucose-6-phosphate isomerase like protein, domain 1"/>
    <property type="match status" value="1"/>
</dbReference>
<dbReference type="HAMAP" id="MF_00068">
    <property type="entry name" value="MurQ"/>
    <property type="match status" value="1"/>
</dbReference>
<dbReference type="InterPro" id="IPR005488">
    <property type="entry name" value="Etherase_MurQ"/>
</dbReference>
<dbReference type="InterPro" id="IPR005486">
    <property type="entry name" value="Glucokinase_regulatory_CS"/>
</dbReference>
<dbReference type="InterPro" id="IPR040190">
    <property type="entry name" value="MURQ/GCKR"/>
</dbReference>
<dbReference type="InterPro" id="IPR001347">
    <property type="entry name" value="SIS_dom"/>
</dbReference>
<dbReference type="InterPro" id="IPR046348">
    <property type="entry name" value="SIS_dom_sf"/>
</dbReference>
<dbReference type="InterPro" id="IPR009060">
    <property type="entry name" value="UBA-like_sf"/>
</dbReference>
<dbReference type="NCBIfam" id="TIGR00274">
    <property type="entry name" value="N-acetylmuramic acid 6-phosphate etherase"/>
    <property type="match status" value="1"/>
</dbReference>
<dbReference type="NCBIfam" id="NF003915">
    <property type="entry name" value="PRK05441.1"/>
    <property type="match status" value="1"/>
</dbReference>
<dbReference type="NCBIfam" id="NF009222">
    <property type="entry name" value="PRK12570.1"/>
    <property type="match status" value="1"/>
</dbReference>
<dbReference type="PANTHER" id="PTHR10088">
    <property type="entry name" value="GLUCOKINASE REGULATORY PROTEIN"/>
    <property type="match status" value="1"/>
</dbReference>
<dbReference type="PANTHER" id="PTHR10088:SF5">
    <property type="entry name" value="N-ACETYLMURAMIC ACID 6-PHOSPHATE ETHERASE"/>
    <property type="match status" value="1"/>
</dbReference>
<dbReference type="Pfam" id="PF20741">
    <property type="entry name" value="GKRP-like_C"/>
    <property type="match status" value="1"/>
</dbReference>
<dbReference type="Pfam" id="PF22645">
    <property type="entry name" value="GKRP_SIS_N"/>
    <property type="match status" value="1"/>
</dbReference>
<dbReference type="SUPFAM" id="SSF53697">
    <property type="entry name" value="SIS domain"/>
    <property type="match status" value="1"/>
</dbReference>
<dbReference type="SUPFAM" id="SSF46934">
    <property type="entry name" value="UBA-like"/>
    <property type="match status" value="1"/>
</dbReference>
<dbReference type="PROSITE" id="PS01272">
    <property type="entry name" value="GCKR"/>
    <property type="match status" value="1"/>
</dbReference>
<dbReference type="PROSITE" id="PS51464">
    <property type="entry name" value="SIS"/>
    <property type="match status" value="1"/>
</dbReference>